<sequence length="74" mass="8729">MEKQNIIEMEGVITESLPNAMFRVHLDNGFDVLAHISGKIRRNYIRILPGDRVKIEMTPYDLTKGRITYRLRKR</sequence>
<keyword id="KW-0150">Chloroplast</keyword>
<keyword id="KW-0396">Initiation factor</keyword>
<keyword id="KW-0934">Plastid</keyword>
<keyword id="KW-0648">Protein biosynthesis</keyword>
<keyword id="KW-0694">RNA-binding</keyword>
<keyword id="KW-0699">rRNA-binding</keyword>
<accession>Q19VB4</accession>
<feature type="chain" id="PRO_0000338960" description="Translation initiation factor IF-1, chloroplastic">
    <location>
        <begin position="1"/>
        <end position="74"/>
    </location>
</feature>
<feature type="domain" description="S1-like" evidence="1">
    <location>
        <begin position="1"/>
        <end position="72"/>
    </location>
</feature>
<name>IF1C_CHLAT</name>
<comment type="function">
    <text evidence="1">One of the essential components for the initiation of protein synthesis. Stabilizes the binding of IF-2 and IF-3 on the 30S subunit to which N-formylmethionyl-tRNA(fMet) subsequently binds. Helps modulate mRNA selection, yielding the 30S pre-initiation complex (PIC). Upon addition of the 50S ribosomal subunit IF-1, IF-2 and IF-3 are released leaving the mature 70S translation initiation complex.</text>
</comment>
<comment type="subunit">
    <text evidence="1">Component of the 30S ribosomal translation pre-initiation complex which assembles on the 30S ribosome in the order IF-2 and IF-3, IF-1 and N-formylmethionyl-tRNA(fMet); mRNA recruitment can occur at any time during PIC assembly.</text>
</comment>
<comment type="subcellular location">
    <subcellularLocation>
        <location evidence="1">Plastid</location>
        <location evidence="1">Chloroplast</location>
    </subcellularLocation>
</comment>
<comment type="similarity">
    <text evidence="1">Belongs to the IF-1 family.</text>
</comment>
<protein>
    <recommendedName>
        <fullName evidence="1">Translation initiation factor IF-1, chloroplastic</fullName>
    </recommendedName>
</protein>
<evidence type="ECO:0000255" key="1">
    <source>
        <dbReference type="HAMAP-Rule" id="MF_00075"/>
    </source>
</evidence>
<reference key="1">
    <citation type="journal article" date="2007" name="BMC Biol.">
        <title>A clade uniting the green algae Mesostigma viride and Chlorokybus atmophyticus represents the deepest branch of the Streptophyta in chloroplast genome-based phylogenies.</title>
        <authorList>
            <person name="Lemieux C."/>
            <person name="Otis C."/>
            <person name="Turmel M."/>
        </authorList>
    </citation>
    <scope>NUCLEOTIDE SEQUENCE [LARGE SCALE GENOMIC DNA]</scope>
    <source>
        <strain>SAG 48.80</strain>
    </source>
</reference>
<proteinExistence type="inferred from homology"/>
<geneLocation type="chloroplast"/>
<organism>
    <name type="scientific">Chlorokybus atmophyticus</name>
    <name type="common">Soil alga</name>
    <dbReference type="NCBI Taxonomy" id="3144"/>
    <lineage>
        <taxon>Eukaryota</taxon>
        <taxon>Viridiplantae</taxon>
        <taxon>Streptophyta</taxon>
        <taxon>Chlorokybophyceae</taxon>
        <taxon>Chlorokybales</taxon>
        <taxon>Chlorokybaceae</taxon>
        <taxon>Chlorokybus</taxon>
    </lineage>
</organism>
<gene>
    <name evidence="1" type="primary">infA</name>
</gene>
<dbReference type="EMBL" id="DQ422812">
    <property type="protein sequence ID" value="ABD62187.2"/>
    <property type="molecule type" value="Genomic_DNA"/>
</dbReference>
<dbReference type="RefSeq" id="YP_001019084.1">
    <property type="nucleotide sequence ID" value="NC_008822.1"/>
</dbReference>
<dbReference type="SMR" id="Q19VB4"/>
<dbReference type="GeneID" id="4783306"/>
<dbReference type="GO" id="GO:0009507">
    <property type="term" value="C:chloroplast"/>
    <property type="evidence" value="ECO:0007669"/>
    <property type="project" value="UniProtKB-SubCell"/>
</dbReference>
<dbReference type="GO" id="GO:0005829">
    <property type="term" value="C:cytosol"/>
    <property type="evidence" value="ECO:0007669"/>
    <property type="project" value="TreeGrafter"/>
</dbReference>
<dbReference type="GO" id="GO:0043022">
    <property type="term" value="F:ribosome binding"/>
    <property type="evidence" value="ECO:0007669"/>
    <property type="project" value="UniProtKB-UniRule"/>
</dbReference>
<dbReference type="GO" id="GO:0019843">
    <property type="term" value="F:rRNA binding"/>
    <property type="evidence" value="ECO:0007669"/>
    <property type="project" value="UniProtKB-UniRule"/>
</dbReference>
<dbReference type="GO" id="GO:0003743">
    <property type="term" value="F:translation initiation factor activity"/>
    <property type="evidence" value="ECO:0007669"/>
    <property type="project" value="UniProtKB-UniRule"/>
</dbReference>
<dbReference type="CDD" id="cd04451">
    <property type="entry name" value="S1_IF1"/>
    <property type="match status" value="1"/>
</dbReference>
<dbReference type="FunFam" id="2.40.50.140:FF:000002">
    <property type="entry name" value="Translation initiation factor IF-1"/>
    <property type="match status" value="1"/>
</dbReference>
<dbReference type="Gene3D" id="2.40.50.140">
    <property type="entry name" value="Nucleic acid-binding proteins"/>
    <property type="match status" value="1"/>
</dbReference>
<dbReference type="HAMAP" id="MF_00075">
    <property type="entry name" value="IF_1"/>
    <property type="match status" value="1"/>
</dbReference>
<dbReference type="InterPro" id="IPR012340">
    <property type="entry name" value="NA-bd_OB-fold"/>
</dbReference>
<dbReference type="InterPro" id="IPR006196">
    <property type="entry name" value="RNA-binding_domain_S1_IF1"/>
</dbReference>
<dbReference type="InterPro" id="IPR003029">
    <property type="entry name" value="S1_domain"/>
</dbReference>
<dbReference type="InterPro" id="IPR004368">
    <property type="entry name" value="TIF_IF1"/>
</dbReference>
<dbReference type="NCBIfam" id="TIGR00008">
    <property type="entry name" value="infA"/>
    <property type="match status" value="1"/>
</dbReference>
<dbReference type="PANTHER" id="PTHR33370">
    <property type="entry name" value="TRANSLATION INITIATION FACTOR IF-1, CHLOROPLASTIC"/>
    <property type="match status" value="1"/>
</dbReference>
<dbReference type="PANTHER" id="PTHR33370:SF1">
    <property type="entry name" value="TRANSLATION INITIATION FACTOR IF-1, CHLOROPLASTIC"/>
    <property type="match status" value="1"/>
</dbReference>
<dbReference type="Pfam" id="PF01176">
    <property type="entry name" value="eIF-1a"/>
    <property type="match status" value="1"/>
</dbReference>
<dbReference type="SMART" id="SM00316">
    <property type="entry name" value="S1"/>
    <property type="match status" value="1"/>
</dbReference>
<dbReference type="SUPFAM" id="SSF50249">
    <property type="entry name" value="Nucleic acid-binding proteins"/>
    <property type="match status" value="1"/>
</dbReference>
<dbReference type="PROSITE" id="PS50832">
    <property type="entry name" value="S1_IF1_TYPE"/>
    <property type="match status" value="1"/>
</dbReference>